<feature type="chain" id="PRO_0000086818" description="MAP kinase kinase kinase wis4">
    <location>
        <begin position="1"/>
        <end position="1401"/>
    </location>
</feature>
<feature type="domain" description="Protein kinase" evidence="1">
    <location>
        <begin position="1037"/>
        <end position="1306"/>
    </location>
</feature>
<feature type="region of interest" description="Disordered" evidence="3">
    <location>
        <begin position="67"/>
        <end position="99"/>
    </location>
</feature>
<feature type="region of interest" description="Disordered" evidence="3">
    <location>
        <begin position="176"/>
        <end position="205"/>
    </location>
</feature>
<feature type="compositionally biased region" description="Polar residues" evidence="3">
    <location>
        <begin position="72"/>
        <end position="99"/>
    </location>
</feature>
<feature type="compositionally biased region" description="Polar residues" evidence="3">
    <location>
        <begin position="176"/>
        <end position="191"/>
    </location>
</feature>
<feature type="active site" description="Proton acceptor" evidence="1 2">
    <location>
        <position position="1161"/>
    </location>
</feature>
<feature type="binding site" evidence="1">
    <location>
        <begin position="1043"/>
        <end position="1051"/>
    </location>
    <ligand>
        <name>ATP</name>
        <dbReference type="ChEBI" id="CHEBI:30616"/>
    </ligand>
</feature>
<feature type="binding site" evidence="1">
    <location>
        <position position="1066"/>
    </location>
    <ligand>
        <name>ATP</name>
        <dbReference type="ChEBI" id="CHEBI:30616"/>
    </ligand>
</feature>
<feature type="sequence conflict" description="In Ref. 3; CAA72718." evidence="4" ref="3">
    <original>RL</original>
    <variation>SP</variation>
    <location>
        <begin position="484"/>
        <end position="485"/>
    </location>
</feature>
<feature type="sequence conflict" description="In Ref. 1; CAA69030." evidence="4" ref="1">
    <original>D</original>
    <variation>V</variation>
    <location>
        <position position="1346"/>
    </location>
</feature>
<organism>
    <name type="scientific">Schizosaccharomyces pombe (strain 972 / ATCC 24843)</name>
    <name type="common">Fission yeast</name>
    <dbReference type="NCBI Taxonomy" id="284812"/>
    <lineage>
        <taxon>Eukaryota</taxon>
        <taxon>Fungi</taxon>
        <taxon>Dikarya</taxon>
        <taxon>Ascomycota</taxon>
        <taxon>Taphrinomycotina</taxon>
        <taxon>Schizosaccharomycetes</taxon>
        <taxon>Schizosaccharomycetales</taxon>
        <taxon>Schizosaccharomycetaceae</taxon>
        <taxon>Schizosaccharomyces</taxon>
    </lineage>
</organism>
<keyword id="KW-0067">ATP-binding</keyword>
<keyword id="KW-0418">Kinase</keyword>
<keyword id="KW-0547">Nucleotide-binding</keyword>
<keyword id="KW-1185">Reference proteome</keyword>
<keyword id="KW-0723">Serine/threonine-protein kinase</keyword>
<keyword id="KW-0808">Transferase</keyword>
<dbReference type="EC" id="2.7.11.25"/>
<dbReference type="EMBL" id="CU329670">
    <property type="protein sequence ID" value="CAB11500.1"/>
    <property type="molecule type" value="Genomic_DNA"/>
</dbReference>
<dbReference type="EMBL" id="Y07750">
    <property type="protein sequence ID" value="CAA69030.1"/>
    <property type="status" value="ALT_INIT"/>
    <property type="molecule type" value="Genomic_DNA"/>
</dbReference>
<dbReference type="EMBL" id="Y11989">
    <property type="protein sequence ID" value="CAA72718.1"/>
    <property type="molecule type" value="Genomic_DNA"/>
</dbReference>
<dbReference type="EMBL" id="U81521">
    <property type="protein sequence ID" value="AAB39762.1"/>
    <property type="molecule type" value="Genomic_DNA"/>
</dbReference>
<dbReference type="PIR" id="T39225">
    <property type="entry name" value="T39225"/>
</dbReference>
<dbReference type="RefSeq" id="NP_593557.1">
    <property type="nucleotide sequence ID" value="NM_001018990.2"/>
</dbReference>
<dbReference type="SMR" id="O14299"/>
<dbReference type="BioGRID" id="279318">
    <property type="interactions" value="42"/>
</dbReference>
<dbReference type="FunCoup" id="O14299">
    <property type="interactions" value="531"/>
</dbReference>
<dbReference type="IntAct" id="O14299">
    <property type="interactions" value="2"/>
</dbReference>
<dbReference type="STRING" id="284812.O14299"/>
<dbReference type="iPTMnet" id="O14299"/>
<dbReference type="PaxDb" id="4896-SPAC9G1.02.1"/>
<dbReference type="EnsemblFungi" id="SPAC9G1.02.1">
    <property type="protein sequence ID" value="SPAC9G1.02.1:pep"/>
    <property type="gene ID" value="SPAC9G1.02"/>
</dbReference>
<dbReference type="GeneID" id="2542873"/>
<dbReference type="KEGG" id="spo:2542873"/>
<dbReference type="PomBase" id="SPAC9G1.02">
    <property type="gene designation" value="wis4"/>
</dbReference>
<dbReference type="VEuPathDB" id="FungiDB:SPAC9G1.02"/>
<dbReference type="eggNOG" id="KOG4645">
    <property type="taxonomic scope" value="Eukaryota"/>
</dbReference>
<dbReference type="HOGENOM" id="CLU_001999_2_0_1"/>
<dbReference type="InParanoid" id="O14299"/>
<dbReference type="OMA" id="PPCVDEN"/>
<dbReference type="PhylomeDB" id="O14299"/>
<dbReference type="BRENDA" id="2.7.11.25">
    <property type="organism ID" value="5613"/>
</dbReference>
<dbReference type="PRO" id="PR:O14299"/>
<dbReference type="Proteomes" id="UP000002485">
    <property type="component" value="Chromosome I"/>
</dbReference>
<dbReference type="GO" id="GO:0005737">
    <property type="term" value="C:cytoplasm"/>
    <property type="evidence" value="ECO:0007005"/>
    <property type="project" value="PomBase"/>
</dbReference>
<dbReference type="GO" id="GO:0005829">
    <property type="term" value="C:cytosol"/>
    <property type="evidence" value="ECO:0007005"/>
    <property type="project" value="PomBase"/>
</dbReference>
<dbReference type="GO" id="GO:1990315">
    <property type="term" value="C:Mcs4 RR-MAPKKK complex"/>
    <property type="evidence" value="ECO:0000314"/>
    <property type="project" value="PomBase"/>
</dbReference>
<dbReference type="GO" id="GO:0005524">
    <property type="term" value="F:ATP binding"/>
    <property type="evidence" value="ECO:0000255"/>
    <property type="project" value="PomBase"/>
</dbReference>
<dbReference type="GO" id="GO:0004709">
    <property type="term" value="F:MAP kinase kinase kinase activity"/>
    <property type="evidence" value="ECO:0000314"/>
    <property type="project" value="PomBase"/>
</dbReference>
<dbReference type="GO" id="GO:0008349">
    <property type="term" value="F:MAP kinase kinase kinase kinase activity"/>
    <property type="evidence" value="ECO:0000314"/>
    <property type="project" value="PomBase"/>
</dbReference>
<dbReference type="GO" id="GO:0106310">
    <property type="term" value="F:protein serine kinase activity"/>
    <property type="evidence" value="ECO:0007669"/>
    <property type="project" value="RHEA"/>
</dbReference>
<dbReference type="GO" id="GO:0038066">
    <property type="term" value="P:p38MAPK cascade"/>
    <property type="evidence" value="ECO:0000315"/>
    <property type="project" value="PomBase"/>
</dbReference>
<dbReference type="GO" id="GO:0051403">
    <property type="term" value="P:stress-activated MAPK cascade"/>
    <property type="evidence" value="ECO:0007669"/>
    <property type="project" value="InterPro"/>
</dbReference>
<dbReference type="CDD" id="cd06626">
    <property type="entry name" value="STKc_MEKK4"/>
    <property type="match status" value="1"/>
</dbReference>
<dbReference type="Gene3D" id="1.10.510.10">
    <property type="entry name" value="Transferase(Phosphotransferase) domain 1"/>
    <property type="match status" value="1"/>
</dbReference>
<dbReference type="InterPro" id="IPR011009">
    <property type="entry name" value="Kinase-like_dom_sf"/>
</dbReference>
<dbReference type="InterPro" id="IPR050538">
    <property type="entry name" value="MAP_kinase_kinase_kinase"/>
</dbReference>
<dbReference type="InterPro" id="IPR017240">
    <property type="entry name" value="MAPKKK_Ssk2/Ssk22"/>
</dbReference>
<dbReference type="InterPro" id="IPR000719">
    <property type="entry name" value="Prot_kinase_dom"/>
</dbReference>
<dbReference type="InterPro" id="IPR008271">
    <property type="entry name" value="Ser/Thr_kinase_AS"/>
</dbReference>
<dbReference type="PANTHER" id="PTHR48016">
    <property type="entry name" value="MAP KINASE KINASE KINASE SSK2-RELATED-RELATED"/>
    <property type="match status" value="1"/>
</dbReference>
<dbReference type="PANTHER" id="PTHR48016:SF32">
    <property type="entry name" value="MITOGEN-ACTIVATED PROTEIN KINASE KINASE KINASE 4"/>
    <property type="match status" value="1"/>
</dbReference>
<dbReference type="Pfam" id="PF00069">
    <property type="entry name" value="Pkinase"/>
    <property type="match status" value="1"/>
</dbReference>
<dbReference type="PIRSF" id="PIRSF037579">
    <property type="entry name" value="MAPKKK_SSK22"/>
    <property type="match status" value="1"/>
</dbReference>
<dbReference type="SMART" id="SM00220">
    <property type="entry name" value="S_TKc"/>
    <property type="match status" value="1"/>
</dbReference>
<dbReference type="SUPFAM" id="SSF56112">
    <property type="entry name" value="Protein kinase-like (PK-like)"/>
    <property type="match status" value="1"/>
</dbReference>
<dbReference type="PROSITE" id="PS50011">
    <property type="entry name" value="PROTEIN_KINASE_DOM"/>
    <property type="match status" value="1"/>
</dbReference>
<dbReference type="PROSITE" id="PS00108">
    <property type="entry name" value="PROTEIN_KINASE_ST"/>
    <property type="match status" value="1"/>
</dbReference>
<reference key="1">
    <citation type="journal article" date="1997" name="EMBO J.">
        <title>Multiple modes of activation of the stress-responsive MAP kinase pathway in fission yeast.</title>
        <authorList>
            <person name="Samejima I."/>
            <person name="Mackie S."/>
            <person name="Fantes P.A."/>
        </authorList>
    </citation>
    <scope>NUCLEOTIDE SEQUENCE [GENOMIC DNA]</scope>
</reference>
<reference key="2">
    <citation type="journal article" date="2002" name="Nature">
        <title>The genome sequence of Schizosaccharomyces pombe.</title>
        <authorList>
            <person name="Wood V."/>
            <person name="Gwilliam R."/>
            <person name="Rajandream M.A."/>
            <person name="Lyne M.H."/>
            <person name="Lyne R."/>
            <person name="Stewart A."/>
            <person name="Sgouros J.G."/>
            <person name="Peat N."/>
            <person name="Hayles J."/>
            <person name="Baker S.G."/>
            <person name="Basham D."/>
            <person name="Bowman S."/>
            <person name="Brooks K."/>
            <person name="Brown D."/>
            <person name="Brown S."/>
            <person name="Chillingworth T."/>
            <person name="Churcher C.M."/>
            <person name="Collins M."/>
            <person name="Connor R."/>
            <person name="Cronin A."/>
            <person name="Davis P."/>
            <person name="Feltwell T."/>
            <person name="Fraser A."/>
            <person name="Gentles S."/>
            <person name="Goble A."/>
            <person name="Hamlin N."/>
            <person name="Harris D.E."/>
            <person name="Hidalgo J."/>
            <person name="Hodgson G."/>
            <person name="Holroyd S."/>
            <person name="Hornsby T."/>
            <person name="Howarth S."/>
            <person name="Huckle E.J."/>
            <person name="Hunt S."/>
            <person name="Jagels K."/>
            <person name="James K.D."/>
            <person name="Jones L."/>
            <person name="Jones M."/>
            <person name="Leather S."/>
            <person name="McDonald S."/>
            <person name="McLean J."/>
            <person name="Mooney P."/>
            <person name="Moule S."/>
            <person name="Mungall K.L."/>
            <person name="Murphy L.D."/>
            <person name="Niblett D."/>
            <person name="Odell C."/>
            <person name="Oliver K."/>
            <person name="O'Neil S."/>
            <person name="Pearson D."/>
            <person name="Quail M.A."/>
            <person name="Rabbinowitsch E."/>
            <person name="Rutherford K.M."/>
            <person name="Rutter S."/>
            <person name="Saunders D."/>
            <person name="Seeger K."/>
            <person name="Sharp S."/>
            <person name="Skelton J."/>
            <person name="Simmonds M.N."/>
            <person name="Squares R."/>
            <person name="Squares S."/>
            <person name="Stevens K."/>
            <person name="Taylor K."/>
            <person name="Taylor R.G."/>
            <person name="Tivey A."/>
            <person name="Walsh S.V."/>
            <person name="Warren T."/>
            <person name="Whitehead S."/>
            <person name="Woodward J.R."/>
            <person name="Volckaert G."/>
            <person name="Aert R."/>
            <person name="Robben J."/>
            <person name="Grymonprez B."/>
            <person name="Weltjens I."/>
            <person name="Vanstreels E."/>
            <person name="Rieger M."/>
            <person name="Schaefer M."/>
            <person name="Mueller-Auer S."/>
            <person name="Gabel C."/>
            <person name="Fuchs M."/>
            <person name="Duesterhoeft A."/>
            <person name="Fritzc C."/>
            <person name="Holzer E."/>
            <person name="Moestl D."/>
            <person name="Hilbert H."/>
            <person name="Borzym K."/>
            <person name="Langer I."/>
            <person name="Beck A."/>
            <person name="Lehrach H."/>
            <person name="Reinhardt R."/>
            <person name="Pohl T.M."/>
            <person name="Eger P."/>
            <person name="Zimmermann W."/>
            <person name="Wedler H."/>
            <person name="Wambutt R."/>
            <person name="Purnelle B."/>
            <person name="Goffeau A."/>
            <person name="Cadieu E."/>
            <person name="Dreano S."/>
            <person name="Gloux S."/>
            <person name="Lelaure V."/>
            <person name="Mottier S."/>
            <person name="Galibert F."/>
            <person name="Aves S.J."/>
            <person name="Xiang Z."/>
            <person name="Hunt C."/>
            <person name="Moore K."/>
            <person name="Hurst S.M."/>
            <person name="Lucas M."/>
            <person name="Rochet M."/>
            <person name="Gaillardin C."/>
            <person name="Tallada V.A."/>
            <person name="Garzon A."/>
            <person name="Thode G."/>
            <person name="Daga R.R."/>
            <person name="Cruzado L."/>
            <person name="Jimenez J."/>
            <person name="Sanchez M."/>
            <person name="del Rey F."/>
            <person name="Benito J."/>
            <person name="Dominguez A."/>
            <person name="Revuelta J.L."/>
            <person name="Moreno S."/>
            <person name="Armstrong J."/>
            <person name="Forsburg S.L."/>
            <person name="Cerutti L."/>
            <person name="Lowe T."/>
            <person name="McCombie W.R."/>
            <person name="Paulsen I."/>
            <person name="Potashkin J."/>
            <person name="Shpakovski G.V."/>
            <person name="Ussery D."/>
            <person name="Barrell B.G."/>
            <person name="Nurse P."/>
        </authorList>
    </citation>
    <scope>NUCLEOTIDE SEQUENCE [LARGE SCALE GENOMIC DNA]</scope>
    <source>
        <strain>972 / ATCC 24843</strain>
    </source>
</reference>
<reference key="3">
    <citation type="journal article" date="1997" name="Genes Dev.">
        <title>The Mcs4 response regulator coordinately controls the stress-activated Wak1-Wis1-Sty1 MAP kinase pathway and fission yeast cell cycle.</title>
        <authorList>
            <person name="Shieh J.C."/>
            <person name="Wilkinson M.G."/>
            <person name="Buck V."/>
            <person name="Morgan B.A."/>
            <person name="Makino K."/>
            <person name="Millar J.B.A."/>
        </authorList>
    </citation>
    <scope>NUCLEOTIDE SEQUENCE [GENOMIC DNA] OF 96-1401</scope>
    <source>
        <strain>972 / ATCC 24843</strain>
    </source>
</reference>
<reference key="4">
    <citation type="journal article" date="1997" name="Mol. Biol. Cell">
        <title>Mcs4 mitotic catastrophe suppressor regulates the fission yeast cell cycle through the Wik1-Wis1-Spc1 kinase cascade.</title>
        <authorList>
            <person name="Shiozaki K."/>
            <person name="Shiozaki M."/>
            <person name="Russell P."/>
        </authorList>
    </citation>
    <scope>NUCLEOTIDE SEQUENCE [GENOMIC DNA] OF 457-543</scope>
    <source>
        <strain>972 / ATCC 24843</strain>
    </source>
</reference>
<gene>
    <name type="primary">wis4</name>
    <name type="synonym">wak1</name>
    <name type="synonym">wik1</name>
    <name type="ORF">SPAC9G1.02</name>
</gene>
<accession>O14299</accession>
<accession>P87062</accession>
<accession>Q92384</accession>
<protein>
    <recommendedName>
        <fullName>MAP kinase kinase kinase wis4</fullName>
        <ecNumber>2.7.11.25</ecNumber>
    </recommendedName>
    <alternativeName>
        <fullName>MAP kinase kinase kinase wak1</fullName>
    </alternativeName>
    <alternativeName>
        <fullName>MAP kinase kinase kinase wik1</fullName>
    </alternativeName>
</protein>
<evidence type="ECO:0000255" key="1">
    <source>
        <dbReference type="PROSITE-ProRule" id="PRU00159"/>
    </source>
</evidence>
<evidence type="ECO:0000255" key="2">
    <source>
        <dbReference type="PROSITE-ProRule" id="PRU10027"/>
    </source>
</evidence>
<evidence type="ECO:0000256" key="3">
    <source>
        <dbReference type="SAM" id="MobiDB-lite"/>
    </source>
</evidence>
<evidence type="ECO:0000305" key="4"/>
<proteinExistence type="inferred from homology"/>
<comment type="function">
    <text>Involved in a signal transduction pathway that is activated in under conditions of heat shock, oxidative stress or limited nutrition. Unlike win1, it is not activated by changes in the osmolarity of the extracellular environment. Activates the wis1 MAP kinase kinase by phosphorylation.</text>
</comment>
<comment type="catalytic activity">
    <reaction>
        <text>L-seryl-[protein] + ATP = O-phospho-L-seryl-[protein] + ADP + H(+)</text>
        <dbReference type="Rhea" id="RHEA:17989"/>
        <dbReference type="Rhea" id="RHEA-COMP:9863"/>
        <dbReference type="Rhea" id="RHEA-COMP:11604"/>
        <dbReference type="ChEBI" id="CHEBI:15378"/>
        <dbReference type="ChEBI" id="CHEBI:29999"/>
        <dbReference type="ChEBI" id="CHEBI:30616"/>
        <dbReference type="ChEBI" id="CHEBI:83421"/>
        <dbReference type="ChEBI" id="CHEBI:456216"/>
        <dbReference type="EC" id="2.7.11.25"/>
    </reaction>
</comment>
<comment type="catalytic activity">
    <reaction>
        <text>L-threonyl-[protein] + ATP = O-phospho-L-threonyl-[protein] + ADP + H(+)</text>
        <dbReference type="Rhea" id="RHEA:46608"/>
        <dbReference type="Rhea" id="RHEA-COMP:11060"/>
        <dbReference type="Rhea" id="RHEA-COMP:11605"/>
        <dbReference type="ChEBI" id="CHEBI:15378"/>
        <dbReference type="ChEBI" id="CHEBI:30013"/>
        <dbReference type="ChEBI" id="CHEBI:30616"/>
        <dbReference type="ChEBI" id="CHEBI:61977"/>
        <dbReference type="ChEBI" id="CHEBI:456216"/>
        <dbReference type="EC" id="2.7.11.25"/>
    </reaction>
</comment>
<comment type="similarity">
    <text evidence="4">Belongs to the protein kinase superfamily. STE Ser/Thr protein kinase family. MAP kinase kinase kinase subfamily.</text>
</comment>
<comment type="sequence caution" evidence="4">
    <conflict type="erroneous initiation">
        <sequence resource="EMBL-CDS" id="CAA69030"/>
    </conflict>
</comment>
<sequence>MGLEHTFYPAEDRFEPLLEHSEPVNFVPKENAKSYVRQGFASPHQSLMDNLVDSTESTKRSENFVSHIPLTPSHSGQSEKLMSTRTSHSPYISPTMSYTNHSPANLTRNSSFNHQHYSTTLRSPPSMRGRGIDVNSSHYPHISRPRTSSDSQKMYTRAPVDYYYIQENPYFNNIDQDSISDKSLPSTNQSLHHSEEDTESDNDFSESIHPEFDIDVFYKVSNILYDESDLQDPEKRERLEWHSMLSSVLKGDVMQTEKRRLRLTEPDGHSGTYISEVWLGLQAWLHGRLNADQAEVIRKSREGVEPVLREVIDFQIQDEETTKPPLEQVTEILEKVEQCKQFYISSREMEENVPLSASKEFNYKLNALISWSNVMESIQVETLVLQKWVGNDEFDLTMRTPQFNYDGVENTSSFVERIFRQSGLQRTFEQRTLTTLNRIIHQAKQTISENAQAFEEMKLPTYEDKLLPLVRFPIKLLEEALRLRLAYAKKIKGPNFLIVDSMLDDFKIALSVAVRIKREYIKIASPSPGWSLPTNVDEDYDNVLLDSLKFYFKLLTLKLSSGNKNLYFKEIDFLENEWAFLNEHIYWINGGDIHMAGQFSYLSNSLLLNVHRYVESHLNGPTERTAASLTNWYSTLLKNTQIRFRKILRFSETLNSRFENASDFVISEGHLPDLVNRLSTTGHFLAYTANLERDGVFVIADHTLSENPEALKALLFSKDISNLETIQQNCSYVLILCPVHPIVWKGRIEKVDVPDFSVDLKTNRVRIIASNKREHLQAAKSVFQSISGDLVTLAVECRSSITRVYKEFIRLSKLCMRISSTVVDCVSAVREACSGVNCHDLIYHVFSFAAEFGQRILRFLSFDSYWQTKLKRKITSLAVEWISFICDECDLMDRKTFRWGVGALEFLMLMIRGNNILLIDDAMFLKIREKVGKSMAFLLTHFDVLGAKSKVAAKLQRESTEVSSSPRLTSFGDVEEEALSIQLLQKETMLRIDELEIERNNTLLERLAIGHVLDDSVFRNRDFIKLASSFSNITIRWQQGHFVRSGMFGDVYTGVNMETGDLLAVKEIKLQDSRTFRSTVDQIHNEMTVLERLNHPNVVTYYGVEVHREKVYIFMEFCQGGSLADLLAHGRIEDENVLKVYVVQLLEGLAYIHSQHILHRDIKPANILLDHRGMIKYSDFGSALYVSPPTDPEVRYEDIQPELQHLAGTPMYMAPEIILGTKKGDFGAMDIWSLGCVILEMMTGSTPWSEMDNEWAIMYHVAAMHTPSIPQNEKISSLARDFIEQCFERDPEQRPRAVDLLTHPWITDFRKKTIITMPPATITKKTSLSHTITEEKTAQLLAGRHDDSKAETDSLAASYKEESALPVASNVGLRQPNELRIDSINLPPAIVTPDTINYSVD</sequence>
<name>WIS4_SCHPO</name>